<sequence>MNPLVIKLGGVLLESDDAMKRLFEALVDYQKFYKRHVSVIHGGGRLIDNLMNKLSLPVKKKNGLRITPSEHINIITGALAGTANKTLLAWALKYNINAIGLCLADGGSVDVERLDENLGHVGKAIPGSPLFLKKLFKEGTIPIISSIGITKDGLLMNVNADLAATALATTLQANLILLSDISSILDGKGQRITEIDSIQAEKLIMQGIITNGMIVKVRAALEAARVLRRPVDIASWQNTEKLKLLFNGVNIGTRVYV</sequence>
<keyword id="KW-0028">Amino-acid biosynthesis</keyword>
<keyword id="KW-0055">Arginine biosynthesis</keyword>
<keyword id="KW-0067">ATP-binding</keyword>
<keyword id="KW-0963">Cytoplasm</keyword>
<keyword id="KW-0418">Kinase</keyword>
<keyword id="KW-0547">Nucleotide-binding</keyword>
<keyword id="KW-0808">Transferase</keyword>
<protein>
    <recommendedName>
        <fullName evidence="1">Acetylglutamate kinase</fullName>
        <ecNumber evidence="1">2.7.2.8</ecNumber>
    </recommendedName>
    <alternativeName>
        <fullName evidence="1">N-acetyl-L-glutamate 5-phosphotransferase</fullName>
    </alternativeName>
    <alternativeName>
        <fullName evidence="1">NAG kinase</fullName>
        <shortName evidence="1">NAGK</shortName>
    </alternativeName>
</protein>
<organism>
    <name type="scientific">Buchnera aphidicola subsp. Acyrthosiphon pisum (strain 5A)</name>
    <dbReference type="NCBI Taxonomy" id="563178"/>
    <lineage>
        <taxon>Bacteria</taxon>
        <taxon>Pseudomonadati</taxon>
        <taxon>Pseudomonadota</taxon>
        <taxon>Gammaproteobacteria</taxon>
        <taxon>Enterobacterales</taxon>
        <taxon>Erwiniaceae</taxon>
        <taxon>Buchnera</taxon>
    </lineage>
</organism>
<evidence type="ECO:0000255" key="1">
    <source>
        <dbReference type="HAMAP-Rule" id="MF_00082"/>
    </source>
</evidence>
<reference key="1">
    <citation type="journal article" date="2009" name="Science">
        <title>The dynamics and time scale of ongoing genomic erosion in symbiotic bacteria.</title>
        <authorList>
            <person name="Moran N.A."/>
            <person name="McLaughlin H.J."/>
            <person name="Sorek R."/>
        </authorList>
    </citation>
    <scope>NUCLEOTIDE SEQUENCE [LARGE SCALE GENOMIC DNA]</scope>
    <source>
        <strain>5A</strain>
    </source>
</reference>
<dbReference type="EC" id="2.7.2.8" evidence="1"/>
<dbReference type="EMBL" id="CP001161">
    <property type="protein sequence ID" value="ACL30429.1"/>
    <property type="molecule type" value="Genomic_DNA"/>
</dbReference>
<dbReference type="RefSeq" id="WP_009874006.1">
    <property type="nucleotide sequence ID" value="NC_011833.1"/>
</dbReference>
<dbReference type="SMR" id="B8D8K7"/>
<dbReference type="KEGG" id="bap:BUAP5A_048"/>
<dbReference type="HOGENOM" id="CLU_053680_1_1_6"/>
<dbReference type="OrthoDB" id="5915023at2"/>
<dbReference type="UniPathway" id="UPA00068">
    <property type="reaction ID" value="UER00107"/>
</dbReference>
<dbReference type="Proteomes" id="UP000006904">
    <property type="component" value="Chromosome"/>
</dbReference>
<dbReference type="GO" id="GO:0005737">
    <property type="term" value="C:cytoplasm"/>
    <property type="evidence" value="ECO:0007669"/>
    <property type="project" value="UniProtKB-SubCell"/>
</dbReference>
<dbReference type="GO" id="GO:0003991">
    <property type="term" value="F:acetylglutamate kinase activity"/>
    <property type="evidence" value="ECO:0007669"/>
    <property type="project" value="UniProtKB-UniRule"/>
</dbReference>
<dbReference type="GO" id="GO:0005524">
    <property type="term" value="F:ATP binding"/>
    <property type="evidence" value="ECO:0007669"/>
    <property type="project" value="UniProtKB-UniRule"/>
</dbReference>
<dbReference type="GO" id="GO:0042450">
    <property type="term" value="P:arginine biosynthetic process via ornithine"/>
    <property type="evidence" value="ECO:0007669"/>
    <property type="project" value="UniProtKB-UniRule"/>
</dbReference>
<dbReference type="GO" id="GO:0006526">
    <property type="term" value="P:L-arginine biosynthetic process"/>
    <property type="evidence" value="ECO:0007669"/>
    <property type="project" value="UniProtKB-UniPathway"/>
</dbReference>
<dbReference type="FunFam" id="3.40.1160.10:FF:000008">
    <property type="entry name" value="Acetylglutamate kinase"/>
    <property type="match status" value="1"/>
</dbReference>
<dbReference type="Gene3D" id="3.40.1160.10">
    <property type="entry name" value="Acetylglutamate kinase-like"/>
    <property type="match status" value="1"/>
</dbReference>
<dbReference type="HAMAP" id="MF_00082">
    <property type="entry name" value="ArgB"/>
    <property type="match status" value="1"/>
</dbReference>
<dbReference type="InterPro" id="IPR036393">
    <property type="entry name" value="AceGlu_kinase-like_sf"/>
</dbReference>
<dbReference type="InterPro" id="IPR004662">
    <property type="entry name" value="AcgluKinase_fam"/>
</dbReference>
<dbReference type="InterPro" id="IPR037528">
    <property type="entry name" value="ArgB"/>
</dbReference>
<dbReference type="InterPro" id="IPR001048">
    <property type="entry name" value="Asp/Glu/Uridylate_kinase"/>
</dbReference>
<dbReference type="NCBIfam" id="TIGR00761">
    <property type="entry name" value="argB"/>
    <property type="match status" value="1"/>
</dbReference>
<dbReference type="PANTHER" id="PTHR23342">
    <property type="entry name" value="N-ACETYLGLUTAMATE SYNTHASE"/>
    <property type="match status" value="1"/>
</dbReference>
<dbReference type="PANTHER" id="PTHR23342:SF0">
    <property type="entry name" value="N-ACETYLGLUTAMATE SYNTHASE, MITOCHONDRIAL"/>
    <property type="match status" value="1"/>
</dbReference>
<dbReference type="Pfam" id="PF00696">
    <property type="entry name" value="AA_kinase"/>
    <property type="match status" value="1"/>
</dbReference>
<dbReference type="PIRSF" id="PIRSF000728">
    <property type="entry name" value="NAGK"/>
    <property type="match status" value="1"/>
</dbReference>
<dbReference type="SUPFAM" id="SSF53633">
    <property type="entry name" value="Carbamate kinase-like"/>
    <property type="match status" value="1"/>
</dbReference>
<accession>B8D8K7</accession>
<name>ARGB_BUCA5</name>
<feature type="chain" id="PRO_1000118343" description="Acetylglutamate kinase">
    <location>
        <begin position="1"/>
        <end position="257"/>
    </location>
</feature>
<feature type="binding site" evidence="1">
    <location>
        <begin position="43"/>
        <end position="44"/>
    </location>
    <ligand>
        <name>substrate</name>
    </ligand>
</feature>
<feature type="binding site" evidence="1">
    <location>
        <position position="65"/>
    </location>
    <ligand>
        <name>substrate</name>
    </ligand>
</feature>
<feature type="binding site" evidence="1">
    <location>
        <position position="157"/>
    </location>
    <ligand>
        <name>substrate</name>
    </ligand>
</feature>
<feature type="binding site" evidence="1">
    <location>
        <begin position="180"/>
        <end position="185"/>
    </location>
    <ligand>
        <name>ATP</name>
        <dbReference type="ChEBI" id="CHEBI:30616"/>
    </ligand>
</feature>
<feature type="binding site" evidence="1">
    <location>
        <begin position="208"/>
        <end position="210"/>
    </location>
    <ligand>
        <name>ATP</name>
        <dbReference type="ChEBI" id="CHEBI:30616"/>
    </ligand>
</feature>
<feature type="site" description="Transition state stabilizer" evidence="1">
    <location>
        <position position="7"/>
    </location>
</feature>
<feature type="site" description="Transition state stabilizer" evidence="1">
    <location>
        <position position="216"/>
    </location>
</feature>
<comment type="function">
    <text evidence="1">Catalyzes the ATP-dependent phosphorylation of N-acetyl-L-glutamate.</text>
</comment>
<comment type="catalytic activity">
    <reaction evidence="1">
        <text>N-acetyl-L-glutamate + ATP = N-acetyl-L-glutamyl 5-phosphate + ADP</text>
        <dbReference type="Rhea" id="RHEA:14629"/>
        <dbReference type="ChEBI" id="CHEBI:30616"/>
        <dbReference type="ChEBI" id="CHEBI:44337"/>
        <dbReference type="ChEBI" id="CHEBI:57936"/>
        <dbReference type="ChEBI" id="CHEBI:456216"/>
        <dbReference type="EC" id="2.7.2.8"/>
    </reaction>
</comment>
<comment type="pathway">
    <text evidence="1">Amino-acid biosynthesis; L-arginine biosynthesis; N(2)-acetyl-L-ornithine from L-glutamate: step 2/4.</text>
</comment>
<comment type="subunit">
    <text evidence="1">Homodimer.</text>
</comment>
<comment type="subcellular location">
    <subcellularLocation>
        <location evidence="1">Cytoplasm</location>
    </subcellularLocation>
</comment>
<comment type="similarity">
    <text evidence="1">Belongs to the acetylglutamate kinase family. ArgB subfamily.</text>
</comment>
<gene>
    <name evidence="1" type="primary">argB</name>
    <name type="ordered locus">BUAP5A_048</name>
</gene>
<proteinExistence type="inferred from homology"/>